<dbReference type="EMBL" id="AM999887">
    <property type="protein sequence ID" value="CAQ55273.1"/>
    <property type="molecule type" value="Genomic_DNA"/>
</dbReference>
<dbReference type="RefSeq" id="WP_012482004.1">
    <property type="nucleotide sequence ID" value="NC_010981.1"/>
</dbReference>
<dbReference type="SMR" id="B3CN25"/>
<dbReference type="KEGG" id="wpi:WP1165"/>
<dbReference type="eggNOG" id="COG0051">
    <property type="taxonomic scope" value="Bacteria"/>
</dbReference>
<dbReference type="HOGENOM" id="CLU_122625_1_3_5"/>
<dbReference type="Proteomes" id="UP000008814">
    <property type="component" value="Chromosome"/>
</dbReference>
<dbReference type="GO" id="GO:1990904">
    <property type="term" value="C:ribonucleoprotein complex"/>
    <property type="evidence" value="ECO:0007669"/>
    <property type="project" value="UniProtKB-KW"/>
</dbReference>
<dbReference type="GO" id="GO:0005840">
    <property type="term" value="C:ribosome"/>
    <property type="evidence" value="ECO:0007669"/>
    <property type="project" value="UniProtKB-KW"/>
</dbReference>
<dbReference type="GO" id="GO:0003735">
    <property type="term" value="F:structural constituent of ribosome"/>
    <property type="evidence" value="ECO:0007669"/>
    <property type="project" value="InterPro"/>
</dbReference>
<dbReference type="GO" id="GO:0000049">
    <property type="term" value="F:tRNA binding"/>
    <property type="evidence" value="ECO:0007669"/>
    <property type="project" value="UniProtKB-UniRule"/>
</dbReference>
<dbReference type="GO" id="GO:0006412">
    <property type="term" value="P:translation"/>
    <property type="evidence" value="ECO:0007669"/>
    <property type="project" value="UniProtKB-UniRule"/>
</dbReference>
<dbReference type="Gene3D" id="3.30.70.600">
    <property type="entry name" value="Ribosomal protein S10 domain"/>
    <property type="match status" value="1"/>
</dbReference>
<dbReference type="HAMAP" id="MF_00508">
    <property type="entry name" value="Ribosomal_uS10"/>
    <property type="match status" value="1"/>
</dbReference>
<dbReference type="InterPro" id="IPR001848">
    <property type="entry name" value="Ribosomal_uS10"/>
</dbReference>
<dbReference type="InterPro" id="IPR027486">
    <property type="entry name" value="Ribosomal_uS10_dom"/>
</dbReference>
<dbReference type="InterPro" id="IPR036838">
    <property type="entry name" value="Ribosomal_uS10_dom_sf"/>
</dbReference>
<dbReference type="NCBIfam" id="NF001861">
    <property type="entry name" value="PRK00596.1"/>
    <property type="match status" value="1"/>
</dbReference>
<dbReference type="NCBIfam" id="TIGR01049">
    <property type="entry name" value="rpsJ_bact"/>
    <property type="match status" value="1"/>
</dbReference>
<dbReference type="PANTHER" id="PTHR11700">
    <property type="entry name" value="30S RIBOSOMAL PROTEIN S10 FAMILY MEMBER"/>
    <property type="match status" value="1"/>
</dbReference>
<dbReference type="Pfam" id="PF00338">
    <property type="entry name" value="Ribosomal_S10"/>
    <property type="match status" value="1"/>
</dbReference>
<dbReference type="PRINTS" id="PR00971">
    <property type="entry name" value="RIBOSOMALS10"/>
</dbReference>
<dbReference type="SMART" id="SM01403">
    <property type="entry name" value="Ribosomal_S10"/>
    <property type="match status" value="1"/>
</dbReference>
<dbReference type="SUPFAM" id="SSF54999">
    <property type="entry name" value="Ribosomal protein S10"/>
    <property type="match status" value="1"/>
</dbReference>
<keyword id="KW-0687">Ribonucleoprotein</keyword>
<keyword id="KW-0689">Ribosomal protein</keyword>
<reference key="1">
    <citation type="journal article" date="2008" name="Mol. Biol. Evol.">
        <title>Genome evolution of Wolbachia strain wPip from the Culex pipiens group.</title>
        <authorList>
            <person name="Klasson L."/>
            <person name="Walker T."/>
            <person name="Sebaihia M."/>
            <person name="Sanders M.J."/>
            <person name="Quail M.A."/>
            <person name="Lord A."/>
            <person name="Sanders S."/>
            <person name="Earl J."/>
            <person name="O'Neill S.L."/>
            <person name="Thomson N."/>
            <person name="Sinkins S.P."/>
            <person name="Parkhill J."/>
        </authorList>
    </citation>
    <scope>NUCLEOTIDE SEQUENCE [LARGE SCALE GENOMIC DNA]</scope>
    <source>
        <strain>wPip</strain>
    </source>
</reference>
<organism>
    <name type="scientific">Wolbachia pipientis subsp. Culex pipiens (strain wPip)</name>
    <dbReference type="NCBI Taxonomy" id="570417"/>
    <lineage>
        <taxon>Bacteria</taxon>
        <taxon>Pseudomonadati</taxon>
        <taxon>Pseudomonadota</taxon>
        <taxon>Alphaproteobacteria</taxon>
        <taxon>Rickettsiales</taxon>
        <taxon>Anaplasmataceae</taxon>
        <taxon>Wolbachieae</taxon>
        <taxon>Wolbachia</taxon>
    </lineage>
</organism>
<comment type="function">
    <text evidence="1">Involved in the binding of tRNA to the ribosomes.</text>
</comment>
<comment type="subunit">
    <text evidence="1">Part of the 30S ribosomal subunit.</text>
</comment>
<comment type="similarity">
    <text evidence="1">Belongs to the universal ribosomal protein uS10 family.</text>
</comment>
<gene>
    <name evidence="1" type="primary">rpsJ</name>
    <name type="ordered locus">WP1165</name>
</gene>
<feature type="chain" id="PRO_1000127203" description="Small ribosomal subunit protein uS10">
    <location>
        <begin position="1"/>
        <end position="106"/>
    </location>
</feature>
<sequence length="106" mass="12285">MKQDIYIRIKAFDCSLLEKCIREFIDQLKQFNADLSGPIALPRKDSKFTVNRSPHVDKKSREQFEMRISKRLIIVHNPTSTMMKMLADLSFSAGVEVDLKVKEVNI</sequence>
<protein>
    <recommendedName>
        <fullName evidence="1">Small ribosomal subunit protein uS10</fullName>
    </recommendedName>
    <alternativeName>
        <fullName evidence="2">30S ribosomal protein S10</fullName>
    </alternativeName>
</protein>
<proteinExistence type="inferred from homology"/>
<evidence type="ECO:0000255" key="1">
    <source>
        <dbReference type="HAMAP-Rule" id="MF_00508"/>
    </source>
</evidence>
<evidence type="ECO:0000305" key="2"/>
<name>RS10_WOLPP</name>
<accession>B3CN25</accession>